<keyword id="KW-0002">3D-structure</keyword>
<keyword id="KW-0046">Antibiotic resistance</keyword>
<keyword id="KW-0067">ATP-binding</keyword>
<keyword id="KW-0963">Cytoplasm</keyword>
<keyword id="KW-0238">DNA-binding</keyword>
<keyword id="KW-0413">Isomerase</keyword>
<keyword id="KW-0547">Nucleotide-binding</keyword>
<keyword id="KW-1185">Reference proteome</keyword>
<keyword id="KW-0799">Topoisomerase</keyword>
<name>GYRA_SHIFL</name>
<sequence>MSDLAREITPVNIEEELKSSYLDYAMSVIVGRALPDVRDGLKPVHRRVLYAMNVLGNDWNKAYKKSARVVGDVIGKYHPHGDSAVYDTIVRMAQPFSLRYMLVDGQGNFGSIDGDSAAAMRYTEIRLAKIAHELMADLEKETVDFVDNYDGTEKIPDVMPTKIPNLLVNGSSGIAVGMATNIPPHNLTEVINGCLAYIDDEDISIEGLMEHIPGPDFPTAAIINGRRGIEEAYRTGRGKVYIRARAEVEVDAKTGRETIIVHEIPYQVNKARLIEKIAELVKEKRVEGISALRDESDKDGMRIVIEVKRDAVGEVVLNNLYSQTQLQVSFGINMVALHHGQPKIMNLKDIIAAFVRHRREVVTRRTIFELRKARDRAHILEALAVALANIDPIIELIRHAPTPAEAKTALVANPWQLGNVAAMLERAGDDAARPEWLEPEFGVRDGLYYLTEQQAQAILDLRLQKLTGLEHEKLLDEYKELLDQIAELLRILGSADRLMEVIREELELVREQFGDKRRTEITANSADINLEDLITQEDVVVTLSHQGYVKYQPLSEYEAQRRGGKGKSAARIKEEDFIDRLLVANTHDHILCFSSRGRVYSMKVYQLPEATRGARGRPIVNLLPLEQDERITAILPVTEFEEGVKVFMATANGTVKKTVLTEFNRLRTAGKVAIKLVDGDELIGVDLTSGEDEVMLFSAEGKVVRFKESSVRAMGCNTTGVRGIRLGEGDKVVSLIVPRGDGAILTATQNGYGKRTAVAEYPTKSRATKGVISIKVTERNGLVVGAVQVDDCDQIMMITDAGTLVRTRVSEISIVGRNTQGVILIRTAEDENVVGLQRVAEPVDEEDLDTIDGSAAEGDDEIAPEVDVDDEPEEE</sequence>
<reference key="1">
    <citation type="journal article" date="2002" name="Nucleic Acids Res.">
        <title>Genome sequence of Shigella flexneri 2a: insights into pathogenicity through comparison with genomes of Escherichia coli K12 and O157.</title>
        <authorList>
            <person name="Jin Q."/>
            <person name="Yuan Z."/>
            <person name="Xu J."/>
            <person name="Wang Y."/>
            <person name="Shen Y."/>
            <person name="Lu W."/>
            <person name="Wang J."/>
            <person name="Liu H."/>
            <person name="Yang J."/>
            <person name="Yang F."/>
            <person name="Zhang X."/>
            <person name="Zhang J."/>
            <person name="Yang G."/>
            <person name="Wu H."/>
            <person name="Qu D."/>
            <person name="Dong J."/>
            <person name="Sun L."/>
            <person name="Xue Y."/>
            <person name="Zhao A."/>
            <person name="Gao Y."/>
            <person name="Zhu J."/>
            <person name="Kan B."/>
            <person name="Ding K."/>
            <person name="Chen S."/>
            <person name="Cheng H."/>
            <person name="Yao Z."/>
            <person name="He B."/>
            <person name="Chen R."/>
            <person name="Ma D."/>
            <person name="Qiang B."/>
            <person name="Wen Y."/>
            <person name="Hou Y."/>
            <person name="Yu J."/>
        </authorList>
    </citation>
    <scope>NUCLEOTIDE SEQUENCE [LARGE SCALE GENOMIC DNA]</scope>
    <source>
        <strain>301 / Serotype 2a</strain>
    </source>
</reference>
<reference key="2">
    <citation type="journal article" date="2003" name="Infect. Immun.">
        <title>Complete genome sequence and comparative genomics of Shigella flexneri serotype 2a strain 2457T.</title>
        <authorList>
            <person name="Wei J."/>
            <person name="Goldberg M.B."/>
            <person name="Burland V."/>
            <person name="Venkatesan M.M."/>
            <person name="Deng W."/>
            <person name="Fournier G."/>
            <person name="Mayhew G.F."/>
            <person name="Plunkett G. III"/>
            <person name="Rose D.J."/>
            <person name="Darling A."/>
            <person name="Mau B."/>
            <person name="Perna N.T."/>
            <person name="Payne S.M."/>
            <person name="Runyen-Janecky L.J."/>
            <person name="Zhou S."/>
            <person name="Schwartz D.C."/>
            <person name="Blattner F.R."/>
        </authorList>
    </citation>
    <scope>NUCLEOTIDE SEQUENCE [LARGE SCALE GENOMIC DNA]</scope>
    <source>
        <strain>ATCC 700930 / 2457T / Serotype 2a</strain>
    </source>
</reference>
<comment type="function">
    <text evidence="1">A type II topoisomerase that negatively supercoils closed circular double-stranded (ds) DNA in an ATP-dependent manner to modulate DNA topology and maintain chromosomes in an underwound state. Negative supercoiling favors strand separation, and DNA replication, transcription, recombination and repair, all of which involve strand separation. Also able to catalyze the interconversion of other topological isomers of dsDNA rings, including catenanes and knotted rings. Type II topoisomerases break and join 2 DNA strands simultaneously in an ATP-dependent manner.</text>
</comment>
<comment type="catalytic activity">
    <reaction evidence="1">
        <text>ATP-dependent breakage, passage and rejoining of double-stranded DNA.</text>
        <dbReference type="EC" id="5.6.2.2"/>
    </reaction>
</comment>
<comment type="subunit">
    <text evidence="1">Heterotetramer, composed of two GyrA and two GyrB chains. In the heterotetramer, GyrA contains the active site tyrosine that forms a transient covalent intermediate with DNA, while GyrB binds cofactors and catalyzes ATP hydrolysis.</text>
</comment>
<comment type="subcellular location">
    <subcellularLocation>
        <location evidence="1">Cytoplasm</location>
    </subcellularLocation>
</comment>
<comment type="miscellaneous">
    <text evidence="1">Few gyrases are as efficient as E.coli at forming negative supercoils. Not all organisms have 2 type II topoisomerases; in organisms with a single type II topoisomerase this enzyme also has to decatenate newly replicated chromosomes.</text>
</comment>
<comment type="similarity">
    <text evidence="1">Belongs to the type II topoisomerase GyrA/ParC subunit family.</text>
</comment>
<gene>
    <name evidence="1" type="primary">gyrA</name>
    <name type="ordered locus">SF2311</name>
    <name type="ordered locus">S2444</name>
</gene>
<accession>P0AES5</accession>
<accession>P09097</accession>
<protein>
    <recommendedName>
        <fullName evidence="1">DNA gyrase subunit A</fullName>
        <ecNumber evidence="1">5.6.2.2</ecNumber>
    </recommendedName>
</protein>
<feature type="chain" id="PRO_0000145249" description="DNA gyrase subunit A">
    <location>
        <begin position="1"/>
        <end position="875"/>
    </location>
</feature>
<feature type="domain" description="Topo IIA-type catalytic" evidence="2">
    <location>
        <begin position="34"/>
        <end position="533"/>
    </location>
</feature>
<feature type="region of interest" description="Disordered" evidence="3">
    <location>
        <begin position="841"/>
        <end position="875"/>
    </location>
</feature>
<feature type="short sequence motif" description="GyrA-box" evidence="1">
    <location>
        <begin position="560"/>
        <end position="566"/>
    </location>
</feature>
<feature type="compositionally biased region" description="Acidic residues" evidence="3">
    <location>
        <begin position="857"/>
        <end position="875"/>
    </location>
</feature>
<feature type="active site" description="O-(5'-phospho-DNA)-tyrosine intermediate" evidence="1">
    <location>
        <position position="122"/>
    </location>
</feature>
<feature type="helix" evidence="4">
    <location>
        <begin position="15"/>
        <end position="17"/>
    </location>
</feature>
<feature type="helix" evidence="4">
    <location>
        <begin position="24"/>
        <end position="33"/>
    </location>
</feature>
<feature type="turn" evidence="4">
    <location>
        <begin position="37"/>
        <end position="39"/>
    </location>
</feature>
<feature type="helix" evidence="4">
    <location>
        <begin position="43"/>
        <end position="54"/>
    </location>
</feature>
<feature type="helix" evidence="4">
    <location>
        <begin position="66"/>
        <end position="76"/>
    </location>
</feature>
<feature type="helix" evidence="4">
    <location>
        <begin position="84"/>
        <end position="91"/>
    </location>
</feature>
<feature type="turn" evidence="4">
    <location>
        <begin position="95"/>
        <end position="97"/>
    </location>
</feature>
<feature type="strand" evidence="4">
    <location>
        <begin position="102"/>
        <end position="107"/>
    </location>
</feature>
<feature type="turn" evidence="4">
    <location>
        <begin position="120"/>
        <end position="122"/>
    </location>
</feature>
<feature type="strand" evidence="4">
    <location>
        <begin position="124"/>
        <end position="127"/>
    </location>
</feature>
<feature type="helix" evidence="4">
    <location>
        <begin position="129"/>
        <end position="134"/>
    </location>
</feature>
<feature type="turn" evidence="4">
    <location>
        <begin position="135"/>
        <end position="139"/>
    </location>
</feature>
<feature type="strand" evidence="4">
    <location>
        <begin position="145"/>
        <end position="147"/>
    </location>
</feature>
<feature type="strand" evidence="4">
    <location>
        <begin position="151"/>
        <end position="158"/>
    </location>
</feature>
<feature type="helix" evidence="4">
    <location>
        <begin position="165"/>
        <end position="169"/>
    </location>
</feature>
<feature type="turn" evidence="4">
    <location>
        <begin position="174"/>
        <end position="177"/>
    </location>
</feature>
<feature type="helix" evidence="4">
    <location>
        <begin position="187"/>
        <end position="199"/>
    </location>
</feature>
<feature type="helix" evidence="4">
    <location>
        <begin position="205"/>
        <end position="211"/>
    </location>
</feature>
<feature type="helix" evidence="4">
    <location>
        <begin position="227"/>
        <end position="235"/>
    </location>
</feature>
<feature type="strand" evidence="4">
    <location>
        <begin position="236"/>
        <end position="243"/>
    </location>
</feature>
<feature type="strand" evidence="4">
    <location>
        <begin position="245"/>
        <end position="250"/>
    </location>
</feature>
<feature type="turn" evidence="4">
    <location>
        <begin position="252"/>
        <end position="254"/>
    </location>
</feature>
<feature type="strand" evidence="4">
    <location>
        <begin position="257"/>
        <end position="263"/>
    </location>
</feature>
<feature type="helix" evidence="4">
    <location>
        <begin position="270"/>
        <end position="282"/>
    </location>
</feature>
<feature type="strand" evidence="4">
    <location>
        <begin position="288"/>
        <end position="294"/>
    </location>
</feature>
<feature type="strand" evidence="4">
    <location>
        <begin position="303"/>
        <end position="307"/>
    </location>
</feature>
<feature type="helix" evidence="4">
    <location>
        <begin position="313"/>
        <end position="321"/>
    </location>
</feature>
<feature type="strand" evidence="4">
    <location>
        <begin position="327"/>
        <end position="333"/>
    </location>
</feature>
<feature type="strand" evidence="4">
    <location>
        <begin position="335"/>
        <end position="338"/>
    </location>
</feature>
<feature type="strand" evidence="4">
    <location>
        <begin position="341"/>
        <end position="344"/>
    </location>
</feature>
<feature type="helix" evidence="4">
    <location>
        <begin position="347"/>
        <end position="388"/>
    </location>
</feature>
<feature type="helix" evidence="4">
    <location>
        <begin position="390"/>
        <end position="399"/>
    </location>
</feature>
<feature type="helix" evidence="4">
    <location>
        <begin position="403"/>
        <end position="412"/>
    </location>
</feature>
<feature type="turn" evidence="4">
    <location>
        <begin position="418"/>
        <end position="420"/>
    </location>
</feature>
<feature type="helix" evidence="4">
    <location>
        <begin position="421"/>
        <end position="424"/>
    </location>
</feature>
<feature type="strand" evidence="4">
    <location>
        <begin position="441"/>
        <end position="449"/>
    </location>
</feature>
<feature type="helix" evidence="4">
    <location>
        <begin position="452"/>
        <end position="460"/>
    </location>
</feature>
<feature type="helix" evidence="4">
    <location>
        <begin position="463"/>
        <end position="466"/>
    </location>
</feature>
<feature type="helix" evidence="4">
    <location>
        <begin position="469"/>
        <end position="492"/>
    </location>
</feature>
<feature type="helix" evidence="4">
    <location>
        <begin position="495"/>
        <end position="513"/>
    </location>
</feature>
<feature type="strand" evidence="4">
    <location>
        <begin position="519"/>
        <end position="521"/>
    </location>
</feature>
<dbReference type="EC" id="5.6.2.2" evidence="1"/>
<dbReference type="EMBL" id="AE005674">
    <property type="protein sequence ID" value="AAN43827.1"/>
    <property type="molecule type" value="Genomic_DNA"/>
</dbReference>
<dbReference type="EMBL" id="AE014073">
    <property type="protein sequence ID" value="AAP17645.1"/>
    <property type="molecule type" value="Genomic_DNA"/>
</dbReference>
<dbReference type="RefSeq" id="NP_708120.1">
    <property type="nucleotide sequence ID" value="NC_004337.2"/>
</dbReference>
<dbReference type="RefSeq" id="WP_001281242.1">
    <property type="nucleotide sequence ID" value="NZ_WHSI01000112.1"/>
</dbReference>
<dbReference type="PDB" id="2Y3P">
    <property type="method" value="X-ray"/>
    <property type="resolution" value="2.62 A"/>
    <property type="chains" value="A/B=2-523"/>
</dbReference>
<dbReference type="PDBsum" id="2Y3P"/>
<dbReference type="SMR" id="P0AES5"/>
<dbReference type="STRING" id="198214.SF2311"/>
<dbReference type="PaxDb" id="198214-SF2311"/>
<dbReference type="GeneID" id="1027274"/>
<dbReference type="GeneID" id="75206476"/>
<dbReference type="KEGG" id="sfl:SF2311"/>
<dbReference type="KEGG" id="sfx:S2444"/>
<dbReference type="PATRIC" id="fig|198214.7.peg.2769"/>
<dbReference type="HOGENOM" id="CLU_002977_6_1_6"/>
<dbReference type="EvolutionaryTrace" id="P0AES5"/>
<dbReference type="Proteomes" id="UP000001006">
    <property type="component" value="Chromosome"/>
</dbReference>
<dbReference type="Proteomes" id="UP000002673">
    <property type="component" value="Chromosome"/>
</dbReference>
<dbReference type="GO" id="GO:0005694">
    <property type="term" value="C:chromosome"/>
    <property type="evidence" value="ECO:0007669"/>
    <property type="project" value="InterPro"/>
</dbReference>
<dbReference type="GO" id="GO:0005737">
    <property type="term" value="C:cytoplasm"/>
    <property type="evidence" value="ECO:0007669"/>
    <property type="project" value="UniProtKB-SubCell"/>
</dbReference>
<dbReference type="GO" id="GO:0009330">
    <property type="term" value="C:DNA topoisomerase type II (double strand cut, ATP-hydrolyzing) complex"/>
    <property type="evidence" value="ECO:0007669"/>
    <property type="project" value="TreeGrafter"/>
</dbReference>
<dbReference type="GO" id="GO:0005524">
    <property type="term" value="F:ATP binding"/>
    <property type="evidence" value="ECO:0007669"/>
    <property type="project" value="UniProtKB-UniRule"/>
</dbReference>
<dbReference type="GO" id="GO:0003677">
    <property type="term" value="F:DNA binding"/>
    <property type="evidence" value="ECO:0007669"/>
    <property type="project" value="UniProtKB-UniRule"/>
</dbReference>
<dbReference type="GO" id="GO:0034335">
    <property type="term" value="F:DNA negative supercoiling activity"/>
    <property type="evidence" value="ECO:0007669"/>
    <property type="project" value="UniProtKB-ARBA"/>
</dbReference>
<dbReference type="GO" id="GO:0006265">
    <property type="term" value="P:DNA topological change"/>
    <property type="evidence" value="ECO:0007669"/>
    <property type="project" value="UniProtKB-UniRule"/>
</dbReference>
<dbReference type="GO" id="GO:0006261">
    <property type="term" value="P:DNA-templated DNA replication"/>
    <property type="evidence" value="ECO:0007669"/>
    <property type="project" value="UniProtKB-UniRule"/>
</dbReference>
<dbReference type="GO" id="GO:0046677">
    <property type="term" value="P:response to antibiotic"/>
    <property type="evidence" value="ECO:0007669"/>
    <property type="project" value="UniProtKB-KW"/>
</dbReference>
<dbReference type="CDD" id="cd00187">
    <property type="entry name" value="TOP4c"/>
    <property type="match status" value="1"/>
</dbReference>
<dbReference type="FunFam" id="2.120.10.90:FF:000002">
    <property type="entry name" value="DNA gyrase subunit A"/>
    <property type="match status" value="1"/>
</dbReference>
<dbReference type="FunFam" id="3.30.1360.40:FF:000002">
    <property type="entry name" value="DNA gyrase subunit A"/>
    <property type="match status" value="1"/>
</dbReference>
<dbReference type="FunFam" id="3.90.199.10:FF:000001">
    <property type="entry name" value="DNA gyrase subunit A"/>
    <property type="match status" value="1"/>
</dbReference>
<dbReference type="Gene3D" id="3.30.1360.40">
    <property type="match status" value="1"/>
</dbReference>
<dbReference type="Gene3D" id="2.120.10.90">
    <property type="entry name" value="DNA gyrase/topoisomerase IV, subunit A, C-terminal"/>
    <property type="match status" value="1"/>
</dbReference>
<dbReference type="Gene3D" id="3.90.199.10">
    <property type="entry name" value="Topoisomerase II, domain 5"/>
    <property type="match status" value="1"/>
</dbReference>
<dbReference type="Gene3D" id="1.10.268.10">
    <property type="entry name" value="Topoisomerase, domain 3"/>
    <property type="match status" value="1"/>
</dbReference>
<dbReference type="HAMAP" id="MF_01897">
    <property type="entry name" value="GyrA"/>
    <property type="match status" value="1"/>
</dbReference>
<dbReference type="InterPro" id="IPR005743">
    <property type="entry name" value="GyrA"/>
</dbReference>
<dbReference type="InterPro" id="IPR006691">
    <property type="entry name" value="GyrA/parC_rep"/>
</dbReference>
<dbReference type="InterPro" id="IPR035516">
    <property type="entry name" value="Gyrase/topoIV_suA_C"/>
</dbReference>
<dbReference type="InterPro" id="IPR013760">
    <property type="entry name" value="Topo_IIA-like_dom_sf"/>
</dbReference>
<dbReference type="InterPro" id="IPR013758">
    <property type="entry name" value="Topo_IIA_A/C_ab"/>
</dbReference>
<dbReference type="InterPro" id="IPR013757">
    <property type="entry name" value="Topo_IIA_A_a_sf"/>
</dbReference>
<dbReference type="InterPro" id="IPR002205">
    <property type="entry name" value="Topo_IIA_dom_A"/>
</dbReference>
<dbReference type="InterPro" id="IPR050220">
    <property type="entry name" value="Type_II_DNA_Topoisomerases"/>
</dbReference>
<dbReference type="NCBIfam" id="TIGR01063">
    <property type="entry name" value="gyrA"/>
    <property type="match status" value="1"/>
</dbReference>
<dbReference type="NCBIfam" id="NF004043">
    <property type="entry name" value="PRK05560.1"/>
    <property type="match status" value="1"/>
</dbReference>
<dbReference type="NCBIfam" id="NF004044">
    <property type="entry name" value="PRK05561.1"/>
    <property type="match status" value="1"/>
</dbReference>
<dbReference type="PANTHER" id="PTHR43493:SF5">
    <property type="entry name" value="DNA GYRASE SUBUNIT A, CHLOROPLASTIC_MITOCHONDRIAL"/>
    <property type="match status" value="1"/>
</dbReference>
<dbReference type="PANTHER" id="PTHR43493">
    <property type="entry name" value="DNA GYRASE/TOPOISOMERASE SUBUNIT A"/>
    <property type="match status" value="1"/>
</dbReference>
<dbReference type="Pfam" id="PF03989">
    <property type="entry name" value="DNA_gyraseA_C"/>
    <property type="match status" value="6"/>
</dbReference>
<dbReference type="Pfam" id="PF00521">
    <property type="entry name" value="DNA_topoisoIV"/>
    <property type="match status" value="1"/>
</dbReference>
<dbReference type="SMART" id="SM00434">
    <property type="entry name" value="TOP4c"/>
    <property type="match status" value="1"/>
</dbReference>
<dbReference type="SUPFAM" id="SSF101904">
    <property type="entry name" value="GyrA/ParC C-terminal domain-like"/>
    <property type="match status" value="1"/>
</dbReference>
<dbReference type="SUPFAM" id="SSF56719">
    <property type="entry name" value="Type II DNA topoisomerase"/>
    <property type="match status" value="1"/>
</dbReference>
<dbReference type="PROSITE" id="PS52040">
    <property type="entry name" value="TOPO_IIA"/>
    <property type="match status" value="1"/>
</dbReference>
<proteinExistence type="evidence at protein level"/>
<evidence type="ECO:0000255" key="1">
    <source>
        <dbReference type="HAMAP-Rule" id="MF_01897"/>
    </source>
</evidence>
<evidence type="ECO:0000255" key="2">
    <source>
        <dbReference type="PROSITE-ProRule" id="PRU01384"/>
    </source>
</evidence>
<evidence type="ECO:0000256" key="3">
    <source>
        <dbReference type="SAM" id="MobiDB-lite"/>
    </source>
</evidence>
<evidence type="ECO:0007829" key="4">
    <source>
        <dbReference type="PDB" id="2Y3P"/>
    </source>
</evidence>
<organism>
    <name type="scientific">Shigella flexneri</name>
    <dbReference type="NCBI Taxonomy" id="623"/>
    <lineage>
        <taxon>Bacteria</taxon>
        <taxon>Pseudomonadati</taxon>
        <taxon>Pseudomonadota</taxon>
        <taxon>Gammaproteobacteria</taxon>
        <taxon>Enterobacterales</taxon>
        <taxon>Enterobacteriaceae</taxon>
        <taxon>Shigella</taxon>
    </lineage>
</organism>